<protein>
    <recommendedName>
        <fullName>Microtubule-associated protein RP/EB family member 2</fullName>
    </recommendedName>
    <alternativeName>
        <fullName>APC-binding protein EB2</fullName>
    </alternativeName>
    <alternativeName>
        <fullName>End-binding protein 2</fullName>
        <shortName>EB2</shortName>
    </alternativeName>
</protein>
<evidence type="ECO:0000250" key="1"/>
<evidence type="ECO:0000250" key="2">
    <source>
        <dbReference type="UniProtKB" id="Q15555"/>
    </source>
</evidence>
<evidence type="ECO:0000255" key="3">
    <source>
        <dbReference type="PROSITE-ProRule" id="PRU00044"/>
    </source>
</evidence>
<evidence type="ECO:0000255" key="4">
    <source>
        <dbReference type="PROSITE-ProRule" id="PRU00576"/>
    </source>
</evidence>
<evidence type="ECO:0000256" key="5">
    <source>
        <dbReference type="SAM" id="MobiDB-lite"/>
    </source>
</evidence>
<evidence type="ECO:0000269" key="6">
    <source>
    </source>
</evidence>
<evidence type="ECO:0000269" key="7">
    <source>
    </source>
</evidence>
<evidence type="ECO:0000269" key="8">
    <source>
    </source>
</evidence>
<evidence type="ECO:0000269" key="9">
    <source>
    </source>
</evidence>
<evidence type="ECO:0000303" key="10">
    <source>
    </source>
</evidence>
<evidence type="ECO:0000305" key="11"/>
<evidence type="ECO:0007744" key="12">
    <source>
    </source>
</evidence>
<gene>
    <name type="primary">Mapre2</name>
</gene>
<feature type="chain" id="PRO_0000213425" description="Microtubule-associated protein RP/EB family member 2">
    <location>
        <begin position="1"/>
        <end position="326"/>
    </location>
</feature>
<feature type="domain" description="Calponin-homology (CH)" evidence="3">
    <location>
        <begin position="56"/>
        <end position="158"/>
    </location>
</feature>
<feature type="domain" description="EB1 C-terminal" evidence="4">
    <location>
        <begin position="235"/>
        <end position="305"/>
    </location>
</feature>
<feature type="region of interest" description="Disordered" evidence="5">
    <location>
        <begin position="170"/>
        <end position="239"/>
    </location>
</feature>
<feature type="region of interest" description="DCTN1-binding" evidence="1">
    <location>
        <begin position="186"/>
        <end position="326"/>
    </location>
</feature>
<feature type="region of interest" description="APC-binding" evidence="1">
    <location>
        <begin position="258"/>
        <end position="301"/>
    </location>
</feature>
<feature type="region of interest" description="Disordered" evidence="5">
    <location>
        <begin position="297"/>
        <end position="326"/>
    </location>
</feature>
<feature type="compositionally biased region" description="Low complexity" evidence="5">
    <location>
        <begin position="199"/>
        <end position="233"/>
    </location>
</feature>
<feature type="compositionally biased region" description="Acidic residues" evidence="5">
    <location>
        <begin position="300"/>
        <end position="312"/>
    </location>
</feature>
<feature type="compositionally biased region" description="Low complexity" evidence="5">
    <location>
        <begin position="317"/>
        <end position="326"/>
    </location>
</feature>
<feature type="modified residue" description="Phosphoserine" evidence="2">
    <location>
        <position position="9"/>
    </location>
</feature>
<feature type="modified residue" description="Phosphotyrosine" evidence="12">
    <location>
        <position position="166"/>
    </location>
</feature>
<feature type="modified residue" description="Phosphoserine" evidence="2">
    <location>
        <position position="218"/>
    </location>
</feature>
<feature type="modified residue" description="Phosphoserine" evidence="2">
    <location>
        <position position="235"/>
    </location>
</feature>
<feature type="splice variant" id="VSP_012946" description="In isoform 2." evidence="10">
    <original>MPGPTQTLSPNGENNNDIIQDNGTIIPFRKHTVRGERSYS</original>
    <variation>MKQIRDQRVIRKGPQKHHSLQQPGRVPGCSN</variation>
    <location>
        <begin position="1"/>
        <end position="40"/>
    </location>
</feature>
<feature type="sequence conflict" description="In Ref. 1; BAC30045." evidence="11" ref="1">
    <original>V</original>
    <variation>E</variation>
    <location>
        <position position="103"/>
    </location>
</feature>
<feature type="sequence conflict" description="In Ref. 2; AAH35254/AAH28987." evidence="11" ref="2">
    <original>H</original>
    <variation>Y</variation>
    <location>
        <position position="251"/>
    </location>
</feature>
<feature type="sequence conflict" description="In Ref. 1; BAC30700." evidence="11" ref="1">
    <original>Q</original>
    <variation>H</variation>
    <location>
        <position position="319"/>
    </location>
</feature>
<proteinExistence type="evidence at protein level"/>
<sequence>MPGPTQTLSPNGENNNDIIQDNGTIIPFRKHTVRGERSYSWGMAVNVYSTSITQETMSRHDIIAWVNDIVSLNYTKVEQLCSGAAYCQFMDMLFPGCISLKKVKFQAKLEHEYIHNFKLLQASFKRMNVDKVIPVEKLVKGRFQDNLDFIQWFKKFYDANYDGKEYDPVEARQGQDAIPPPDPGEQIFNLPKKSHHANSPTAGAAKSSPASKPGSTPSRPSSAKRASSSGSASRSDKDLETQVIQLNEQVHSLKLALEGVEKERDFYFGKLREIELLCQEHGQENDDLVQRLMEVLYASDEQEGQTEEPEAEEQAHDQQPQQQEEY</sequence>
<keyword id="KW-0025">Alternative splicing</keyword>
<keyword id="KW-0131">Cell cycle</keyword>
<keyword id="KW-0132">Cell division</keyword>
<keyword id="KW-0963">Cytoplasm</keyword>
<keyword id="KW-0206">Cytoskeleton</keyword>
<keyword id="KW-0493">Microtubule</keyword>
<keyword id="KW-0498">Mitosis</keyword>
<keyword id="KW-0597">Phosphoprotein</keyword>
<keyword id="KW-1185">Reference proteome</keyword>
<keyword id="KW-0832">Ubl conjugation</keyword>
<reference key="1">
    <citation type="journal article" date="2005" name="Science">
        <title>The transcriptional landscape of the mammalian genome.</title>
        <authorList>
            <person name="Carninci P."/>
            <person name="Kasukawa T."/>
            <person name="Katayama S."/>
            <person name="Gough J."/>
            <person name="Frith M.C."/>
            <person name="Maeda N."/>
            <person name="Oyama R."/>
            <person name="Ravasi T."/>
            <person name="Lenhard B."/>
            <person name="Wells C."/>
            <person name="Kodzius R."/>
            <person name="Shimokawa K."/>
            <person name="Bajic V.B."/>
            <person name="Brenner S.E."/>
            <person name="Batalov S."/>
            <person name="Forrest A.R."/>
            <person name="Zavolan M."/>
            <person name="Davis M.J."/>
            <person name="Wilming L.G."/>
            <person name="Aidinis V."/>
            <person name="Allen J.E."/>
            <person name="Ambesi-Impiombato A."/>
            <person name="Apweiler R."/>
            <person name="Aturaliya R.N."/>
            <person name="Bailey T.L."/>
            <person name="Bansal M."/>
            <person name="Baxter L."/>
            <person name="Beisel K.W."/>
            <person name="Bersano T."/>
            <person name="Bono H."/>
            <person name="Chalk A.M."/>
            <person name="Chiu K.P."/>
            <person name="Choudhary V."/>
            <person name="Christoffels A."/>
            <person name="Clutterbuck D.R."/>
            <person name="Crowe M.L."/>
            <person name="Dalla E."/>
            <person name="Dalrymple B.P."/>
            <person name="de Bono B."/>
            <person name="Della Gatta G."/>
            <person name="di Bernardo D."/>
            <person name="Down T."/>
            <person name="Engstrom P."/>
            <person name="Fagiolini M."/>
            <person name="Faulkner G."/>
            <person name="Fletcher C.F."/>
            <person name="Fukushima T."/>
            <person name="Furuno M."/>
            <person name="Futaki S."/>
            <person name="Gariboldi M."/>
            <person name="Georgii-Hemming P."/>
            <person name="Gingeras T.R."/>
            <person name="Gojobori T."/>
            <person name="Green R.E."/>
            <person name="Gustincich S."/>
            <person name="Harbers M."/>
            <person name="Hayashi Y."/>
            <person name="Hensch T.K."/>
            <person name="Hirokawa N."/>
            <person name="Hill D."/>
            <person name="Huminiecki L."/>
            <person name="Iacono M."/>
            <person name="Ikeo K."/>
            <person name="Iwama A."/>
            <person name="Ishikawa T."/>
            <person name="Jakt M."/>
            <person name="Kanapin A."/>
            <person name="Katoh M."/>
            <person name="Kawasawa Y."/>
            <person name="Kelso J."/>
            <person name="Kitamura H."/>
            <person name="Kitano H."/>
            <person name="Kollias G."/>
            <person name="Krishnan S.P."/>
            <person name="Kruger A."/>
            <person name="Kummerfeld S.K."/>
            <person name="Kurochkin I.V."/>
            <person name="Lareau L.F."/>
            <person name="Lazarevic D."/>
            <person name="Lipovich L."/>
            <person name="Liu J."/>
            <person name="Liuni S."/>
            <person name="McWilliam S."/>
            <person name="Madan Babu M."/>
            <person name="Madera M."/>
            <person name="Marchionni L."/>
            <person name="Matsuda H."/>
            <person name="Matsuzawa S."/>
            <person name="Miki H."/>
            <person name="Mignone F."/>
            <person name="Miyake S."/>
            <person name="Morris K."/>
            <person name="Mottagui-Tabar S."/>
            <person name="Mulder N."/>
            <person name="Nakano N."/>
            <person name="Nakauchi H."/>
            <person name="Ng P."/>
            <person name="Nilsson R."/>
            <person name="Nishiguchi S."/>
            <person name="Nishikawa S."/>
            <person name="Nori F."/>
            <person name="Ohara O."/>
            <person name="Okazaki Y."/>
            <person name="Orlando V."/>
            <person name="Pang K.C."/>
            <person name="Pavan W.J."/>
            <person name="Pavesi G."/>
            <person name="Pesole G."/>
            <person name="Petrovsky N."/>
            <person name="Piazza S."/>
            <person name="Reed J."/>
            <person name="Reid J.F."/>
            <person name="Ring B.Z."/>
            <person name="Ringwald M."/>
            <person name="Rost B."/>
            <person name="Ruan Y."/>
            <person name="Salzberg S.L."/>
            <person name="Sandelin A."/>
            <person name="Schneider C."/>
            <person name="Schoenbach C."/>
            <person name="Sekiguchi K."/>
            <person name="Semple C.A."/>
            <person name="Seno S."/>
            <person name="Sessa L."/>
            <person name="Sheng Y."/>
            <person name="Shibata Y."/>
            <person name="Shimada H."/>
            <person name="Shimada K."/>
            <person name="Silva D."/>
            <person name="Sinclair B."/>
            <person name="Sperling S."/>
            <person name="Stupka E."/>
            <person name="Sugiura K."/>
            <person name="Sultana R."/>
            <person name="Takenaka Y."/>
            <person name="Taki K."/>
            <person name="Tammoja K."/>
            <person name="Tan S.L."/>
            <person name="Tang S."/>
            <person name="Taylor M.S."/>
            <person name="Tegner J."/>
            <person name="Teichmann S.A."/>
            <person name="Ueda H.R."/>
            <person name="van Nimwegen E."/>
            <person name="Verardo R."/>
            <person name="Wei C.L."/>
            <person name="Yagi K."/>
            <person name="Yamanishi H."/>
            <person name="Zabarovsky E."/>
            <person name="Zhu S."/>
            <person name="Zimmer A."/>
            <person name="Hide W."/>
            <person name="Bult C."/>
            <person name="Grimmond S.M."/>
            <person name="Teasdale R.D."/>
            <person name="Liu E.T."/>
            <person name="Brusic V."/>
            <person name="Quackenbush J."/>
            <person name="Wahlestedt C."/>
            <person name="Mattick J.S."/>
            <person name="Hume D.A."/>
            <person name="Kai C."/>
            <person name="Sasaki D."/>
            <person name="Tomaru Y."/>
            <person name="Fukuda S."/>
            <person name="Kanamori-Katayama M."/>
            <person name="Suzuki M."/>
            <person name="Aoki J."/>
            <person name="Arakawa T."/>
            <person name="Iida J."/>
            <person name="Imamura K."/>
            <person name="Itoh M."/>
            <person name="Kato T."/>
            <person name="Kawaji H."/>
            <person name="Kawagashira N."/>
            <person name="Kawashima T."/>
            <person name="Kojima M."/>
            <person name="Kondo S."/>
            <person name="Konno H."/>
            <person name="Nakano K."/>
            <person name="Ninomiya N."/>
            <person name="Nishio T."/>
            <person name="Okada M."/>
            <person name="Plessy C."/>
            <person name="Shibata K."/>
            <person name="Shiraki T."/>
            <person name="Suzuki S."/>
            <person name="Tagami M."/>
            <person name="Waki K."/>
            <person name="Watahiki A."/>
            <person name="Okamura-Oho Y."/>
            <person name="Suzuki H."/>
            <person name="Kawai J."/>
            <person name="Hayashizaki Y."/>
        </authorList>
    </citation>
    <scope>NUCLEOTIDE SEQUENCE [LARGE SCALE MRNA] (ISOFORMS 1 AND 2)</scope>
    <source>
        <strain>C57BL/6J</strain>
        <tissue>Aorta</tissue>
        <tissue>Corpora quadrigemina</tissue>
        <tissue>Hypothalamus</tissue>
        <tissue>Skin</tissue>
        <tissue>Sympathetic ganglion</tissue>
        <tissue>Vein</tissue>
    </source>
</reference>
<reference key="2">
    <citation type="journal article" date="2004" name="Genome Res.">
        <title>The status, quality, and expansion of the NIH full-length cDNA project: the Mammalian Gene Collection (MGC).</title>
        <authorList>
            <consortium name="The MGC Project Team"/>
        </authorList>
    </citation>
    <scope>NUCLEOTIDE SEQUENCE [LARGE SCALE MRNA] (ISOFORM 1)</scope>
    <source>
        <strain>FVB/N</strain>
        <tissue>Eye</tissue>
        <tissue>Liver</tissue>
    </source>
</reference>
<reference key="3">
    <citation type="journal article" date="2007" name="J. Immunol.">
        <title>Quantitative time-resolved phosphoproteomic analysis of mast cell signaling.</title>
        <authorList>
            <person name="Cao L."/>
            <person name="Yu K."/>
            <person name="Banh C."/>
            <person name="Nguyen V."/>
            <person name="Ritz A."/>
            <person name="Raphael B.J."/>
            <person name="Kawakami Y."/>
            <person name="Kawakami T."/>
            <person name="Salomon A.R."/>
        </authorList>
    </citation>
    <scope>PHOSPHORYLATION [LARGE SCALE ANALYSIS] AT TYR-166</scope>
    <scope>IDENTIFICATION BY MASS SPECTROMETRY [LARGE SCALE ANALYSIS]</scope>
    <source>
        <tissue>Mast cell</tissue>
    </source>
</reference>
<reference key="4">
    <citation type="journal article" date="2010" name="Cell">
        <title>A tissue-specific atlas of mouse protein phosphorylation and expression.</title>
        <authorList>
            <person name="Huttlin E.L."/>
            <person name="Jedrychowski M.P."/>
            <person name="Elias J.E."/>
            <person name="Goswami T."/>
            <person name="Rad R."/>
            <person name="Beausoleil S.A."/>
            <person name="Villen J."/>
            <person name="Haas W."/>
            <person name="Sowa M.E."/>
            <person name="Gygi S.P."/>
        </authorList>
    </citation>
    <scope>IDENTIFICATION BY MASS SPECTROMETRY [LARGE SCALE ANALYSIS]</scope>
    <source>
        <tissue>Brain</tissue>
        <tissue>Brown adipose tissue</tissue>
        <tissue>Heart</tissue>
        <tissue>Kidney</tissue>
        <tissue>Liver</tissue>
        <tissue>Lung</tissue>
        <tissue>Pancreas</tissue>
        <tissue>Spleen</tissue>
        <tissue>Testis</tissue>
    </source>
</reference>
<reference key="5">
    <citation type="journal article" date="2011" name="J. Cell Biol.">
        <title>SLAIN2 links microtubule plus end-tracking proteins and controls microtubule growth in interphase.</title>
        <authorList>
            <person name="van der Vaart B."/>
            <person name="Manatschal C."/>
            <person name="Grigoriev I."/>
            <person name="Olieric V."/>
            <person name="Gouveia S.M."/>
            <person name="Bjelic S."/>
            <person name="Demmers J."/>
            <person name="Vorobjev I."/>
            <person name="Hoogenraad C.C."/>
            <person name="Steinmetz M.O."/>
            <person name="Akhmanova A."/>
        </authorList>
    </citation>
    <scope>INTERACTION WITH SLAIN1</scope>
</reference>
<reference key="6">
    <citation type="journal article" date="2013" name="J. Cell Sci.">
        <title>The microtubule end-binding protein EB2 is a central regulator of microtubule reorganisation in apico-basal epithelial differentiation.</title>
        <authorList>
            <person name="Goldspink D.A."/>
            <person name="Gadsby J.R."/>
            <person name="Bellett G."/>
            <person name="Keynton J."/>
            <person name="Tyrrell B.J."/>
            <person name="Lund E.K."/>
            <person name="Powell P.P."/>
            <person name="Thomas P."/>
            <person name="Mogensen M.M."/>
        </authorList>
    </citation>
    <scope>FUNCTION</scope>
    <scope>TISSUE SPECIFICITY</scope>
    <scope>SUBCELLULAR LOCATION</scope>
</reference>
<reference key="7">
    <citation type="journal article" date="2022" name="Exp. Cell Res.">
        <title>MAPRE2 regulates the first meiotic progression in mouse oocytes.</title>
        <authorList>
            <person name="Li Y.Y."/>
            <person name="Lei W.L."/>
            <person name="Zhang C.F."/>
            <person name="Sun S.M."/>
            <person name="Zhao B.W."/>
            <person name="Xu K."/>
            <person name="Hou Y."/>
            <person name="Ouyang Y.C."/>
            <person name="Wang Z.B."/>
            <person name="Guo L."/>
            <person name="Sun Q.Y."/>
            <person name="Han Z."/>
        </authorList>
    </citation>
    <scope>FUNCTION</scope>
    <scope>SUBCELLULAR LOCATION</scope>
    <scope>DISRUPTION PHENOTYPE</scope>
</reference>
<reference key="8">
    <citation type="journal article" date="2024" name="Cell Biochem. Biophys.">
        <title>E3 Ubiquitin Ligase ASB14 Inhibits Cardiomyocyte Proliferation by Regulating MAPRE2 Ubiquitination.</title>
        <authorList>
            <person name="Yang Y."/>
            <person name="Ma D."/>
            <person name="Liu B."/>
            <person name="Sun X."/>
            <person name="Fu W."/>
            <person name="Lv F."/>
            <person name="Qiu C."/>
        </authorList>
    </citation>
    <scope>INTERACTION WITH ASB14</scope>
    <scope>UBIQUITINATION</scope>
</reference>
<dbReference type="EMBL" id="AK028823">
    <property type="protein sequence ID" value="BAC26138.1"/>
    <property type="molecule type" value="mRNA"/>
</dbReference>
<dbReference type="EMBL" id="AK038562">
    <property type="protein sequence ID" value="BAC30045.1"/>
    <property type="molecule type" value="mRNA"/>
</dbReference>
<dbReference type="EMBL" id="AK040767">
    <property type="protein sequence ID" value="BAC30700.1"/>
    <property type="molecule type" value="mRNA"/>
</dbReference>
<dbReference type="EMBL" id="AK045493">
    <property type="protein sequence ID" value="BAC32393.1"/>
    <property type="molecule type" value="mRNA"/>
</dbReference>
<dbReference type="EMBL" id="AK045904">
    <property type="protein sequence ID" value="BAE43326.1"/>
    <property type="molecule type" value="mRNA"/>
</dbReference>
<dbReference type="EMBL" id="AK046221">
    <property type="protein sequence ID" value="BAC32643.1"/>
    <property type="molecule type" value="mRNA"/>
</dbReference>
<dbReference type="EMBL" id="AK148954">
    <property type="protein sequence ID" value="BAE28700.1"/>
    <property type="molecule type" value="mRNA"/>
</dbReference>
<dbReference type="EMBL" id="BC025804">
    <property type="protein sequence ID" value="AAH25804.1"/>
    <property type="molecule type" value="mRNA"/>
</dbReference>
<dbReference type="EMBL" id="BC027056">
    <property type="protein sequence ID" value="AAH27056.1"/>
    <property type="molecule type" value="mRNA"/>
</dbReference>
<dbReference type="EMBL" id="BC028987">
    <property type="protein sequence ID" value="AAH28987.1"/>
    <property type="molecule type" value="mRNA"/>
</dbReference>
<dbReference type="EMBL" id="BC035254">
    <property type="protein sequence ID" value="AAH35254.1"/>
    <property type="molecule type" value="mRNA"/>
</dbReference>
<dbReference type="CCDS" id="CCDS29095.1">
    <molecule id="Q8R001-1"/>
</dbReference>
<dbReference type="CCDS" id="CCDS50237.1">
    <molecule id="Q8R001-2"/>
</dbReference>
<dbReference type="RefSeq" id="NP_001156413.1">
    <molecule id="Q8R001-2"/>
    <property type="nucleotide sequence ID" value="NM_001162941.1"/>
</dbReference>
<dbReference type="RefSeq" id="NP_001156414.1">
    <property type="nucleotide sequence ID" value="NM_001162942.1"/>
</dbReference>
<dbReference type="RefSeq" id="NP_694698.3">
    <molecule id="Q8R001-1"/>
    <property type="nucleotide sequence ID" value="NM_153058.4"/>
</dbReference>
<dbReference type="SMR" id="Q8R001"/>
<dbReference type="BioGRID" id="229310">
    <property type="interactions" value="14"/>
</dbReference>
<dbReference type="FunCoup" id="Q8R001">
    <property type="interactions" value="1099"/>
</dbReference>
<dbReference type="IntAct" id="Q8R001">
    <property type="interactions" value="3"/>
</dbReference>
<dbReference type="MINT" id="Q8R001"/>
<dbReference type="STRING" id="10090.ENSMUSP00000025127"/>
<dbReference type="GlyGen" id="Q8R001">
    <property type="glycosylation" value="3 sites, 1 O-linked glycan (1 site)"/>
</dbReference>
<dbReference type="iPTMnet" id="Q8R001"/>
<dbReference type="PhosphoSitePlus" id="Q8R001"/>
<dbReference type="SwissPalm" id="Q8R001"/>
<dbReference type="jPOST" id="Q8R001"/>
<dbReference type="PaxDb" id="10090-ENSMUSP00000025127"/>
<dbReference type="PeptideAtlas" id="Q8R001"/>
<dbReference type="ProteomicsDB" id="292086">
    <molecule id="Q8R001-1"/>
</dbReference>
<dbReference type="ProteomicsDB" id="292087">
    <molecule id="Q8R001-2"/>
</dbReference>
<dbReference type="Pumba" id="Q8R001"/>
<dbReference type="Antibodypedia" id="8544">
    <property type="antibodies" value="437 antibodies from 31 providers"/>
</dbReference>
<dbReference type="DNASU" id="212307"/>
<dbReference type="Ensembl" id="ENSMUST00000025127.5">
    <molecule id="Q8R001-1"/>
    <property type="protein sequence ID" value="ENSMUSP00000025127.4"/>
    <property type="gene ID" value="ENSMUSG00000024277.15"/>
</dbReference>
<dbReference type="Ensembl" id="ENSMUST00000115830.8">
    <molecule id="Q8R001-2"/>
    <property type="protein sequence ID" value="ENSMUSP00000111496.2"/>
    <property type="gene ID" value="ENSMUSG00000024277.15"/>
</dbReference>
<dbReference type="GeneID" id="212307"/>
<dbReference type="KEGG" id="mmu:212307"/>
<dbReference type="UCSC" id="uc008ege.2">
    <molecule id="Q8R001-2"/>
    <property type="organism name" value="mouse"/>
</dbReference>
<dbReference type="UCSC" id="uc008egf.2">
    <molecule id="Q8R001-1"/>
    <property type="organism name" value="mouse"/>
</dbReference>
<dbReference type="AGR" id="MGI:106271"/>
<dbReference type="CTD" id="10982"/>
<dbReference type="MGI" id="MGI:106271">
    <property type="gene designation" value="Mapre2"/>
</dbReference>
<dbReference type="VEuPathDB" id="HostDB:ENSMUSG00000024277"/>
<dbReference type="eggNOG" id="KOG3000">
    <property type="taxonomic scope" value="Eukaryota"/>
</dbReference>
<dbReference type="GeneTree" id="ENSGT00490000043329"/>
<dbReference type="InParanoid" id="Q8R001"/>
<dbReference type="OMA" id="WIKRFWD"/>
<dbReference type="OrthoDB" id="2119228at2759"/>
<dbReference type="PhylomeDB" id="Q8R001"/>
<dbReference type="TreeFam" id="TF313620"/>
<dbReference type="BioGRID-ORCS" id="212307">
    <property type="hits" value="3 hits in 76 CRISPR screens"/>
</dbReference>
<dbReference type="ChiTaRS" id="Mapre2">
    <property type="organism name" value="mouse"/>
</dbReference>
<dbReference type="PRO" id="PR:Q8R001"/>
<dbReference type="Proteomes" id="UP000000589">
    <property type="component" value="Chromosome 18"/>
</dbReference>
<dbReference type="RNAct" id="Q8R001">
    <property type="molecule type" value="protein"/>
</dbReference>
<dbReference type="Bgee" id="ENSMUSG00000024277">
    <property type="expression patterns" value="Expressed in rostral migratory stream and 262 other cell types or tissues"/>
</dbReference>
<dbReference type="ExpressionAtlas" id="Q8R001">
    <property type="expression patterns" value="baseline and differential"/>
</dbReference>
<dbReference type="GO" id="GO:0005737">
    <property type="term" value="C:cytoplasm"/>
    <property type="evidence" value="ECO:0007669"/>
    <property type="project" value="UniProtKB-SubCell"/>
</dbReference>
<dbReference type="GO" id="GO:0005925">
    <property type="term" value="C:focal adhesion"/>
    <property type="evidence" value="ECO:0000314"/>
    <property type="project" value="ARUK-UCL"/>
</dbReference>
<dbReference type="GO" id="GO:0005874">
    <property type="term" value="C:microtubule"/>
    <property type="evidence" value="ECO:0007669"/>
    <property type="project" value="UniProtKB-KW"/>
</dbReference>
<dbReference type="GO" id="GO:0005819">
    <property type="term" value="C:spindle"/>
    <property type="evidence" value="ECO:0007669"/>
    <property type="project" value="UniProtKB-SubCell"/>
</dbReference>
<dbReference type="GO" id="GO:0042802">
    <property type="term" value="F:identical protein binding"/>
    <property type="evidence" value="ECO:0007669"/>
    <property type="project" value="Ensembl"/>
</dbReference>
<dbReference type="GO" id="GO:0051010">
    <property type="term" value="F:microtubule plus-end binding"/>
    <property type="evidence" value="ECO:0000314"/>
    <property type="project" value="MGI"/>
</dbReference>
<dbReference type="GO" id="GO:0019901">
    <property type="term" value="F:protein kinase binding"/>
    <property type="evidence" value="ECO:0000353"/>
    <property type="project" value="ARUK-UCL"/>
</dbReference>
<dbReference type="GO" id="GO:0051301">
    <property type="term" value="P:cell division"/>
    <property type="evidence" value="ECO:0007669"/>
    <property type="project" value="UniProtKB-KW"/>
</dbReference>
<dbReference type="GO" id="GO:0032014">
    <property type="term" value="P:positive regulation of ARF protein signal transduction"/>
    <property type="evidence" value="ECO:0000315"/>
    <property type="project" value="ARUK-UCL"/>
</dbReference>
<dbReference type="GO" id="GO:0120183">
    <property type="term" value="P:positive regulation of focal adhesion disassembly"/>
    <property type="evidence" value="ECO:0000315"/>
    <property type="project" value="ARUK-UCL"/>
</dbReference>
<dbReference type="GO" id="GO:0051549">
    <property type="term" value="P:positive regulation of keratinocyte migration"/>
    <property type="evidence" value="ECO:0000315"/>
    <property type="project" value="ARUK-UCL"/>
</dbReference>
<dbReference type="FunFam" id="1.20.5.1430:FF:000002">
    <property type="entry name" value="microtubule-associated protein RP/EB family member 2 isoform X1"/>
    <property type="match status" value="1"/>
</dbReference>
<dbReference type="FunFam" id="1.10.418.10:FF:000007">
    <property type="entry name" value="Microtubule-associated protein, RP/EB family, member 2"/>
    <property type="match status" value="1"/>
</dbReference>
<dbReference type="Gene3D" id="1.20.5.1430">
    <property type="match status" value="1"/>
</dbReference>
<dbReference type="Gene3D" id="1.10.418.10">
    <property type="entry name" value="Calponin-like domain"/>
    <property type="match status" value="1"/>
</dbReference>
<dbReference type="InterPro" id="IPR001715">
    <property type="entry name" value="CH_dom"/>
</dbReference>
<dbReference type="InterPro" id="IPR036872">
    <property type="entry name" value="CH_dom_sf"/>
</dbReference>
<dbReference type="InterPro" id="IPR004953">
    <property type="entry name" value="EB1_C"/>
</dbReference>
<dbReference type="InterPro" id="IPR036133">
    <property type="entry name" value="EB1_C_sf"/>
</dbReference>
<dbReference type="InterPro" id="IPR027328">
    <property type="entry name" value="MAPRE"/>
</dbReference>
<dbReference type="PANTHER" id="PTHR10623">
    <property type="entry name" value="MICROTUBULE-ASSOCIATED PROTEIN RP/EB FAMILY MEMBER"/>
    <property type="match status" value="1"/>
</dbReference>
<dbReference type="Pfam" id="PF00307">
    <property type="entry name" value="CH"/>
    <property type="match status" value="1"/>
</dbReference>
<dbReference type="Pfam" id="PF03271">
    <property type="entry name" value="EB1"/>
    <property type="match status" value="1"/>
</dbReference>
<dbReference type="SUPFAM" id="SSF47576">
    <property type="entry name" value="Calponin-homology domain, CH-domain"/>
    <property type="match status" value="1"/>
</dbReference>
<dbReference type="SUPFAM" id="SSF140612">
    <property type="entry name" value="EB1 dimerisation domain-like"/>
    <property type="match status" value="1"/>
</dbReference>
<dbReference type="PROSITE" id="PS50021">
    <property type="entry name" value="CH"/>
    <property type="match status" value="1"/>
</dbReference>
<dbReference type="PROSITE" id="PS51230">
    <property type="entry name" value="EB1_C"/>
    <property type="match status" value="1"/>
</dbReference>
<name>MARE2_MOUSE</name>
<organism>
    <name type="scientific">Mus musculus</name>
    <name type="common">Mouse</name>
    <dbReference type="NCBI Taxonomy" id="10090"/>
    <lineage>
        <taxon>Eukaryota</taxon>
        <taxon>Metazoa</taxon>
        <taxon>Chordata</taxon>
        <taxon>Craniata</taxon>
        <taxon>Vertebrata</taxon>
        <taxon>Euteleostomi</taxon>
        <taxon>Mammalia</taxon>
        <taxon>Eutheria</taxon>
        <taxon>Euarchontoglires</taxon>
        <taxon>Glires</taxon>
        <taxon>Rodentia</taxon>
        <taxon>Myomorpha</taxon>
        <taxon>Muroidea</taxon>
        <taxon>Muridae</taxon>
        <taxon>Murinae</taxon>
        <taxon>Mus</taxon>
        <taxon>Mus</taxon>
    </lineage>
</organism>
<comment type="function">
    <text evidence="2 7 8">Adapter protein that is involved in microtubule polymerization, and spindle function by stabilizing microtubules and anchoring them at centrosomes. Therefore, ensures mitotic progression and genome stability (By similarity). Acts as a central regulator of microtubule reorganization in apico-basal epithelial differentiation (PubMed:23813963). Plays a role during oocyte meiosis by regulating microtubule dynamics (PubMed:35398309). Participates in neurite growth by interacting with plexin B3/PLXNB3 and microtubule reorganization during apico-basal epithelial differentiation (By similarity). Plays also an essential role for cell migration and focal adhesion dynamics. Mechanistically, recruits HAX1 to microtubules in order to regulate focal adhesion dynamics (By similarity).</text>
</comment>
<comment type="subunit">
    <text evidence="2 6">Interacts with DCTN1. Interacts with APC (via C-terminal). Interacts with monomeric and polymerized tubulin (By similarity). Interacts with SLAIN1 (PubMed:21646404). Interacts (via the N-terminal region) with BAG1 (By similarity). Interacts with ASB14 (PubMed:38319584).</text>
</comment>
<comment type="subcellular location">
    <subcellularLocation>
        <location evidence="8">Cytoplasm</location>
    </subcellularLocation>
    <subcellularLocation>
        <location evidence="7">Cytoplasm</location>
        <location evidence="7">Cytoskeleton</location>
    </subcellularLocation>
    <subcellularLocation>
        <location evidence="8">Cytoplasm</location>
        <location evidence="8">Cytoskeleton</location>
        <location evidence="8">Spindle</location>
    </subcellularLocation>
    <text evidence="7 8">Associated with the microtubule network. Accumulates at the plus end of microtubules (PubMed:23813963).</text>
</comment>
<comment type="alternative products">
    <event type="alternative splicing"/>
    <isoform>
        <id>Q8R001-1</id>
        <name>1</name>
        <sequence type="displayed"/>
    </isoform>
    <isoform>
        <id>Q8R001-2</id>
        <name>2</name>
        <sequence type="described" ref="VSP_012946"/>
    </isoform>
</comment>
<comment type="tissue specificity">
    <text evidence="7">Expressed during early stages of apico-basal epithelial differentiation but down-regulated in most cells at later stages.</text>
</comment>
<comment type="domain">
    <text evidence="1">Composed of two functionally independent domains. The N-terminal domain forms a hydrophobic cleft involved in microtubule binding and the C-terminal is involved in the formation of mutually exclusive complexes with APC and DCTN1 (By similarity).</text>
</comment>
<comment type="PTM">
    <text evidence="9">Ubiquitinated in an ASB14-dependent manner; leading to proteasomal degradation.</text>
</comment>
<comment type="PTM">
    <text evidence="2">Phosphorylated at Ser-235 by CK2 leading to enhanced cell adhesion. Phosphorylated by CDK1 and AURKB during mitosis reduces the binding affinity of MAPRE2 for microtubules.</text>
</comment>
<comment type="disruption phenotype">
    <text evidence="8">Mapre2 knockdown inhibits chromosome segregation. Mechanistically, perturbs CDK1-cyclin B1 activity in metaphase I-anaphase I transition.</text>
</comment>
<comment type="similarity">
    <text evidence="11">Belongs to the MAPRE family.</text>
</comment>
<accession>Q8R001</accession>
<accession>Q3UF61</accession>
<accession>Q8BLZ6</accession>
<accession>Q8BYR6</accession>
<accession>Q8C177</accession>
<accession>Q8K109</accession>